<keyword id="KW-1185">Reference proteome</keyword>
<keyword id="KW-0687">Ribonucleoprotein</keyword>
<keyword id="KW-0689">Ribosomal protein</keyword>
<feature type="chain" id="PRO_0000134261" description="Small ribosomal subunit protein uS2">
    <location>
        <begin position="1"/>
        <end position="269"/>
    </location>
</feature>
<protein>
    <recommendedName>
        <fullName evidence="1">Small ribosomal subunit protein uS2</fullName>
    </recommendedName>
    <alternativeName>
        <fullName>30S ribosomal protein S2</fullName>
    </alternativeName>
</protein>
<dbReference type="EMBL" id="BA000022">
    <property type="protein sequence ID" value="BAA18147.1"/>
    <property type="molecule type" value="Genomic_DNA"/>
</dbReference>
<dbReference type="PIR" id="S75586">
    <property type="entry name" value="S75586"/>
</dbReference>
<dbReference type="SMR" id="P74071"/>
<dbReference type="FunCoup" id="P74071">
    <property type="interactions" value="486"/>
</dbReference>
<dbReference type="IntAct" id="P74071">
    <property type="interactions" value="1"/>
</dbReference>
<dbReference type="STRING" id="1148.gene:10499019"/>
<dbReference type="PaxDb" id="1148-1653232"/>
<dbReference type="EnsemblBacteria" id="BAA18147">
    <property type="protein sequence ID" value="BAA18147"/>
    <property type="gene ID" value="BAA18147"/>
</dbReference>
<dbReference type="KEGG" id="syn:sll1260"/>
<dbReference type="eggNOG" id="COG0052">
    <property type="taxonomic scope" value="Bacteria"/>
</dbReference>
<dbReference type="InParanoid" id="P74071"/>
<dbReference type="PhylomeDB" id="P74071"/>
<dbReference type="Proteomes" id="UP000001425">
    <property type="component" value="Chromosome"/>
</dbReference>
<dbReference type="GO" id="GO:0022627">
    <property type="term" value="C:cytosolic small ribosomal subunit"/>
    <property type="evidence" value="ECO:0000318"/>
    <property type="project" value="GO_Central"/>
</dbReference>
<dbReference type="GO" id="GO:0003735">
    <property type="term" value="F:structural constituent of ribosome"/>
    <property type="evidence" value="ECO:0000318"/>
    <property type="project" value="GO_Central"/>
</dbReference>
<dbReference type="GO" id="GO:0006412">
    <property type="term" value="P:translation"/>
    <property type="evidence" value="ECO:0007669"/>
    <property type="project" value="UniProtKB-UniRule"/>
</dbReference>
<dbReference type="CDD" id="cd01425">
    <property type="entry name" value="RPS2"/>
    <property type="match status" value="1"/>
</dbReference>
<dbReference type="FunFam" id="1.10.287.610:FF:000001">
    <property type="entry name" value="30S ribosomal protein S2"/>
    <property type="match status" value="1"/>
</dbReference>
<dbReference type="Gene3D" id="3.40.50.10490">
    <property type="entry name" value="Glucose-6-phosphate isomerase like protein, domain 1"/>
    <property type="match status" value="1"/>
</dbReference>
<dbReference type="Gene3D" id="1.10.287.610">
    <property type="entry name" value="Helix hairpin bin"/>
    <property type="match status" value="1"/>
</dbReference>
<dbReference type="HAMAP" id="MF_00291_B">
    <property type="entry name" value="Ribosomal_uS2_B"/>
    <property type="match status" value="1"/>
</dbReference>
<dbReference type="InterPro" id="IPR001865">
    <property type="entry name" value="Ribosomal_uS2"/>
</dbReference>
<dbReference type="InterPro" id="IPR005706">
    <property type="entry name" value="Ribosomal_uS2_bac/mit/plastid"/>
</dbReference>
<dbReference type="InterPro" id="IPR018130">
    <property type="entry name" value="Ribosomal_uS2_CS"/>
</dbReference>
<dbReference type="InterPro" id="IPR023591">
    <property type="entry name" value="Ribosomal_uS2_flav_dom_sf"/>
</dbReference>
<dbReference type="NCBIfam" id="TIGR01011">
    <property type="entry name" value="rpsB_bact"/>
    <property type="match status" value="1"/>
</dbReference>
<dbReference type="PANTHER" id="PTHR12534">
    <property type="entry name" value="30S RIBOSOMAL PROTEIN S2 PROKARYOTIC AND ORGANELLAR"/>
    <property type="match status" value="1"/>
</dbReference>
<dbReference type="PANTHER" id="PTHR12534:SF0">
    <property type="entry name" value="SMALL RIBOSOMAL SUBUNIT PROTEIN US2M"/>
    <property type="match status" value="1"/>
</dbReference>
<dbReference type="Pfam" id="PF00318">
    <property type="entry name" value="Ribosomal_S2"/>
    <property type="match status" value="1"/>
</dbReference>
<dbReference type="PRINTS" id="PR00395">
    <property type="entry name" value="RIBOSOMALS2"/>
</dbReference>
<dbReference type="SUPFAM" id="SSF52313">
    <property type="entry name" value="Ribosomal protein S2"/>
    <property type="match status" value="1"/>
</dbReference>
<dbReference type="PROSITE" id="PS00962">
    <property type="entry name" value="RIBOSOMAL_S2_1"/>
    <property type="match status" value="1"/>
</dbReference>
<dbReference type="PROSITE" id="PS00963">
    <property type="entry name" value="RIBOSOMAL_S2_2"/>
    <property type="match status" value="1"/>
</dbReference>
<proteinExistence type="inferred from homology"/>
<accession>P74071</accession>
<comment type="similarity">
    <text evidence="1">Belongs to the universal ribosomal protein uS2 family.</text>
</comment>
<reference key="1">
    <citation type="journal article" date="1996" name="DNA Res.">
        <title>Sequence analysis of the genome of the unicellular cyanobacterium Synechocystis sp. strain PCC6803. II. Sequence determination of the entire genome and assignment of potential protein-coding regions.</title>
        <authorList>
            <person name="Kaneko T."/>
            <person name="Sato S."/>
            <person name="Kotani H."/>
            <person name="Tanaka A."/>
            <person name="Asamizu E."/>
            <person name="Nakamura Y."/>
            <person name="Miyajima N."/>
            <person name="Hirosawa M."/>
            <person name="Sugiura M."/>
            <person name="Sasamoto S."/>
            <person name="Kimura T."/>
            <person name="Hosouchi T."/>
            <person name="Matsuno A."/>
            <person name="Muraki A."/>
            <person name="Nakazaki N."/>
            <person name="Naruo K."/>
            <person name="Okumura S."/>
            <person name="Shimpo S."/>
            <person name="Takeuchi C."/>
            <person name="Wada T."/>
            <person name="Watanabe A."/>
            <person name="Yamada M."/>
            <person name="Yasuda M."/>
            <person name="Tabata S."/>
        </authorList>
    </citation>
    <scope>NUCLEOTIDE SEQUENCE [LARGE SCALE GENOMIC DNA]</scope>
    <source>
        <strain>ATCC 27184 / PCC 6803 / Kazusa</strain>
    </source>
</reference>
<evidence type="ECO:0000305" key="1"/>
<gene>
    <name type="primary">rpsB</name>
    <name type="synonym">rps2</name>
    <name type="ordered locus">sll1260</name>
</gene>
<sequence>MPVVSLADLLESGVHFGHQTRRWNPRMDQYIYTARNGVHIIDLVQTAQLMEDAYEYVRSSTINGKKFLFVGTKRQAAGIISQEAQRCGAHYVNQRWLGGMLTNWETIRKRVDRLKELEALEASGGIDRRGKKEGSMLRRELGKLQKYLGGIKNMRKLPDVVVIVDQRREHNAIHECQKLGIPIIAMLDTNCDPDVVDVPIPANDDAIRSIKLIVGKLADAIYEGRHGQPDVSDDYEEFDEGLDGDNLEVEAAEEVEEAAEAEVAATPEA</sequence>
<organism>
    <name type="scientific">Synechocystis sp. (strain ATCC 27184 / PCC 6803 / Kazusa)</name>
    <dbReference type="NCBI Taxonomy" id="1111708"/>
    <lineage>
        <taxon>Bacteria</taxon>
        <taxon>Bacillati</taxon>
        <taxon>Cyanobacteriota</taxon>
        <taxon>Cyanophyceae</taxon>
        <taxon>Synechococcales</taxon>
        <taxon>Merismopediaceae</taxon>
        <taxon>Synechocystis</taxon>
    </lineage>
</organism>
<name>RS2_SYNY3</name>